<organism>
    <name type="scientific">Gallus gallus</name>
    <name type="common">Chicken</name>
    <dbReference type="NCBI Taxonomy" id="9031"/>
    <lineage>
        <taxon>Eukaryota</taxon>
        <taxon>Metazoa</taxon>
        <taxon>Chordata</taxon>
        <taxon>Craniata</taxon>
        <taxon>Vertebrata</taxon>
        <taxon>Euteleostomi</taxon>
        <taxon>Archelosauria</taxon>
        <taxon>Archosauria</taxon>
        <taxon>Dinosauria</taxon>
        <taxon>Saurischia</taxon>
        <taxon>Theropoda</taxon>
        <taxon>Coelurosauria</taxon>
        <taxon>Aves</taxon>
        <taxon>Neognathae</taxon>
        <taxon>Galloanserae</taxon>
        <taxon>Galliformes</taxon>
        <taxon>Phasianidae</taxon>
        <taxon>Phasianinae</taxon>
        <taxon>Gallus</taxon>
    </lineage>
</organism>
<name>NUBP2_CHICK</name>
<comment type="function">
    <text evidence="2">Component of the cytosolic iron-sulfur (Fe/S) protein assembly (CIA) machinery. Required for maturation of extramitochondrial Fe-S proteins. The NUBP1-NUBP2 heterotetramer forms a Fe-S scaffold complex, mediating the de novo assembly of an Fe-S cluster and its transfer to target apoproteins.</text>
</comment>
<comment type="cofactor">
    <cofactor evidence="2">
        <name>[4Fe-4S] cluster</name>
        <dbReference type="ChEBI" id="CHEBI:49883"/>
    </cofactor>
    <text evidence="2">Binds 4 [4Fe-4S] clusters per heterotetramer. Contains two stable clusters in the N-termini of NUBP1 and two labile, bridging clusters between subunits of the NUBP1-NUBP2 heterotetramer.</text>
</comment>
<comment type="subunit">
    <text evidence="2">Heterotetramer of 2 NUBP1 and 2 NUBP2 chains.</text>
</comment>
<comment type="subcellular location">
    <subcellularLocation>
        <location evidence="2">Cytoplasm</location>
    </subcellularLocation>
</comment>
<comment type="similarity">
    <text evidence="2">Belongs to the Mrp/NBP35 ATP-binding proteins family. NUBP2/CFD1 subfamily.</text>
</comment>
<sequence length="272" mass="29359">MEEVVAERSNLGGVRHILLVLSGKGGVGKSTISTELALSLRHSGKKVGILDVDLCGPSIPRMFKVQDNDVHQCDAGWVPVFVDQEKSISLMSIGFLLEKPDDAVVWRGPKKNALIKQFVADVAWGELDFLIVDTPPGTSDEHISTVEALRPYKPLGAILVTTPQAVSVGDVRRELTFCKKTGLRVLGIVENMSGFVCPHCSECTNIFSKGGGEELAKHAGVPFLGSVPLDPQLSQSLEEGRDFIQEFPKSSAFPALTRIAQQILDGALQRSS</sequence>
<keyword id="KW-0004">4Fe-4S</keyword>
<keyword id="KW-0067">ATP-binding</keyword>
<keyword id="KW-0963">Cytoplasm</keyword>
<keyword id="KW-0408">Iron</keyword>
<keyword id="KW-0411">Iron-sulfur</keyword>
<keyword id="KW-0479">Metal-binding</keyword>
<keyword id="KW-0547">Nucleotide-binding</keyword>
<keyword id="KW-1185">Reference proteome</keyword>
<reference evidence="3" key="1">
    <citation type="journal article" date="2005" name="Genome Biol.">
        <title>Full-length cDNAs from chicken bursal lymphocytes to facilitate gene function analysis.</title>
        <authorList>
            <person name="Caldwell R.B."/>
            <person name="Kierzek A.M."/>
            <person name="Arakawa H."/>
            <person name="Bezzubov Y."/>
            <person name="Zaim J."/>
            <person name="Fiedler P."/>
            <person name="Kutter S."/>
            <person name="Blagodatski A."/>
            <person name="Kostovska D."/>
            <person name="Koter M."/>
            <person name="Plachy J."/>
            <person name="Carninci P."/>
            <person name="Hayashizaki Y."/>
            <person name="Buerstedde J.-M."/>
        </authorList>
    </citation>
    <scope>NUCLEOTIDE SEQUENCE [LARGE SCALE MRNA]</scope>
    <source>
        <strain evidence="3">CB</strain>
        <tissue evidence="3">Bursa of Fabricius</tissue>
    </source>
</reference>
<dbReference type="EMBL" id="AJ719980">
    <property type="protein sequence ID" value="CAG31639.1"/>
    <property type="molecule type" value="mRNA"/>
</dbReference>
<dbReference type="RefSeq" id="NP_001007834.1">
    <property type="nucleotide sequence ID" value="NM_001007833.3"/>
</dbReference>
<dbReference type="SMR" id="Q5ZKV4"/>
<dbReference type="FunCoup" id="Q5ZKV4">
    <property type="interactions" value="702"/>
</dbReference>
<dbReference type="STRING" id="9031.ENSGALP00000003634"/>
<dbReference type="PaxDb" id="9031-ENSGALP00000003634"/>
<dbReference type="Ensembl" id="ENSGALT00010044585.1">
    <property type="protein sequence ID" value="ENSGALP00010026540.1"/>
    <property type="gene ID" value="ENSGALG00010018444.1"/>
</dbReference>
<dbReference type="GeneID" id="416402"/>
<dbReference type="KEGG" id="gga:416402"/>
<dbReference type="CTD" id="10101"/>
<dbReference type="VEuPathDB" id="HostDB:geneid_416402"/>
<dbReference type="eggNOG" id="KOG3022">
    <property type="taxonomic scope" value="Eukaryota"/>
</dbReference>
<dbReference type="GeneTree" id="ENSGT00950000183193"/>
<dbReference type="HOGENOM" id="CLU_024839_0_1_1"/>
<dbReference type="InParanoid" id="Q5ZKV4"/>
<dbReference type="OMA" id="WIPVFAD"/>
<dbReference type="OrthoDB" id="1741334at2759"/>
<dbReference type="PhylomeDB" id="Q5ZKV4"/>
<dbReference type="TreeFam" id="TF354321"/>
<dbReference type="PRO" id="PR:Q5ZKV4"/>
<dbReference type="Proteomes" id="UP000000539">
    <property type="component" value="Chromosome 14"/>
</dbReference>
<dbReference type="Bgee" id="ENSGALG00000002316">
    <property type="expression patterns" value="Expressed in liver and 14 other cell types or tissues"/>
</dbReference>
<dbReference type="GO" id="GO:0005829">
    <property type="term" value="C:cytosol"/>
    <property type="evidence" value="ECO:0000318"/>
    <property type="project" value="GO_Central"/>
</dbReference>
<dbReference type="GO" id="GO:0005654">
    <property type="term" value="C:nucleoplasm"/>
    <property type="evidence" value="ECO:0007669"/>
    <property type="project" value="Ensembl"/>
</dbReference>
<dbReference type="GO" id="GO:0031616">
    <property type="term" value="C:spindle pole centrosome"/>
    <property type="evidence" value="ECO:0007669"/>
    <property type="project" value="Ensembl"/>
</dbReference>
<dbReference type="GO" id="GO:0051539">
    <property type="term" value="F:4 iron, 4 sulfur cluster binding"/>
    <property type="evidence" value="ECO:0007669"/>
    <property type="project" value="UniProtKB-UniRule"/>
</dbReference>
<dbReference type="GO" id="GO:0005524">
    <property type="term" value="F:ATP binding"/>
    <property type="evidence" value="ECO:0007669"/>
    <property type="project" value="UniProtKB-KW"/>
</dbReference>
<dbReference type="GO" id="GO:0140663">
    <property type="term" value="F:ATP-dependent FeS chaperone activity"/>
    <property type="evidence" value="ECO:0007669"/>
    <property type="project" value="InterPro"/>
</dbReference>
<dbReference type="GO" id="GO:0051536">
    <property type="term" value="F:iron-sulfur cluster binding"/>
    <property type="evidence" value="ECO:0000318"/>
    <property type="project" value="GO_Central"/>
</dbReference>
<dbReference type="GO" id="GO:0046872">
    <property type="term" value="F:metal ion binding"/>
    <property type="evidence" value="ECO:0007669"/>
    <property type="project" value="UniProtKB-KW"/>
</dbReference>
<dbReference type="GO" id="GO:0016226">
    <property type="term" value="P:iron-sulfur cluster assembly"/>
    <property type="evidence" value="ECO:0000318"/>
    <property type="project" value="GO_Central"/>
</dbReference>
<dbReference type="CDD" id="cd02037">
    <property type="entry name" value="Mrp_NBP35"/>
    <property type="match status" value="1"/>
</dbReference>
<dbReference type="FunFam" id="3.40.50.300:FF:000796">
    <property type="entry name" value="Cytosolic Fe-S cluster assembly factor NUBP2"/>
    <property type="match status" value="1"/>
</dbReference>
<dbReference type="Gene3D" id="3.40.50.300">
    <property type="entry name" value="P-loop containing nucleotide triphosphate hydrolases"/>
    <property type="match status" value="1"/>
</dbReference>
<dbReference type="HAMAP" id="MF_02040">
    <property type="entry name" value="Mrp_NBP35"/>
    <property type="match status" value="1"/>
</dbReference>
<dbReference type="HAMAP" id="MF_03039">
    <property type="entry name" value="NUBP2"/>
    <property type="match status" value="1"/>
</dbReference>
<dbReference type="InterPro" id="IPR000808">
    <property type="entry name" value="Mrp-like_CS"/>
</dbReference>
<dbReference type="InterPro" id="IPR019591">
    <property type="entry name" value="Mrp/NBP35_ATP-bd"/>
</dbReference>
<dbReference type="InterPro" id="IPR028600">
    <property type="entry name" value="NUBP2/Cfd1_eukaryotes"/>
</dbReference>
<dbReference type="InterPro" id="IPR027417">
    <property type="entry name" value="P-loop_NTPase"/>
</dbReference>
<dbReference type="InterPro" id="IPR033756">
    <property type="entry name" value="YlxH/NBP35"/>
</dbReference>
<dbReference type="PANTHER" id="PTHR23264:SF19">
    <property type="entry name" value="CYTOSOLIC FE-S CLUSTER ASSEMBLY FACTOR NUBP2"/>
    <property type="match status" value="1"/>
</dbReference>
<dbReference type="PANTHER" id="PTHR23264">
    <property type="entry name" value="NUCLEOTIDE-BINDING PROTEIN NBP35 YEAST -RELATED"/>
    <property type="match status" value="1"/>
</dbReference>
<dbReference type="Pfam" id="PF10609">
    <property type="entry name" value="ParA"/>
    <property type="match status" value="1"/>
</dbReference>
<dbReference type="SUPFAM" id="SSF52540">
    <property type="entry name" value="P-loop containing nucleoside triphosphate hydrolases"/>
    <property type="match status" value="1"/>
</dbReference>
<dbReference type="PROSITE" id="PS01215">
    <property type="entry name" value="MRP"/>
    <property type="match status" value="1"/>
</dbReference>
<proteinExistence type="evidence at transcript level"/>
<protein>
    <recommendedName>
        <fullName evidence="2">Cytosolic Fe-S cluster assembly factor NUBP2</fullName>
    </recommendedName>
    <alternativeName>
        <fullName evidence="2">Nucleotide-binding protein 2</fullName>
        <shortName evidence="2">NBP 2</shortName>
    </alternativeName>
</protein>
<feature type="chain" id="PRO_0000306171" description="Cytosolic Fe-S cluster assembly factor NUBP2">
    <location>
        <begin position="1"/>
        <end position="272"/>
    </location>
</feature>
<feature type="binding site" evidence="2">
    <location>
        <begin position="23"/>
        <end position="30"/>
    </location>
    <ligand>
        <name>ATP</name>
        <dbReference type="ChEBI" id="CHEBI:30616"/>
    </ligand>
</feature>
<feature type="binding site" evidence="2">
    <location>
        <position position="197"/>
    </location>
    <ligand>
        <name>[4Fe-4S] cluster</name>
        <dbReference type="ChEBI" id="CHEBI:49883"/>
        <note>ligand shared between dimeric partners</note>
    </ligand>
</feature>
<feature type="binding site" evidence="2">
    <location>
        <position position="200"/>
    </location>
    <ligand>
        <name>[4Fe-4S] cluster</name>
        <dbReference type="ChEBI" id="CHEBI:49883"/>
        <note>ligand shared between dimeric partners</note>
    </ligand>
</feature>
<gene>
    <name evidence="1 2" type="primary">NUBP2</name>
    <name type="ORF">RCJMB04_9a23</name>
</gene>
<accession>Q5ZKV4</accession>
<evidence type="ECO:0000250" key="1">
    <source>
        <dbReference type="UniProtKB" id="Q9R061"/>
    </source>
</evidence>
<evidence type="ECO:0000255" key="2">
    <source>
        <dbReference type="HAMAP-Rule" id="MF_03039"/>
    </source>
</evidence>
<evidence type="ECO:0000312" key="3">
    <source>
        <dbReference type="EMBL" id="CAG31639.1"/>
    </source>
</evidence>